<organism>
    <name type="scientific">Nitrosospira multiformis (strain ATCC 25196 / NCIMB 11849 / C 71)</name>
    <dbReference type="NCBI Taxonomy" id="323848"/>
    <lineage>
        <taxon>Bacteria</taxon>
        <taxon>Pseudomonadati</taxon>
        <taxon>Pseudomonadota</taxon>
        <taxon>Betaproteobacteria</taxon>
        <taxon>Nitrosomonadales</taxon>
        <taxon>Nitrosomonadaceae</taxon>
        <taxon>Nitrosospira</taxon>
    </lineage>
</organism>
<sequence length="915" mass="104082">MPAAIDKDENIQKEGKRIELVKDSPKQFAASGAAAVSAQPNSDKLADVSPLHAERTVAQAQEASVSSFNEEEVIHDLQHYLPSQAPLKDFIHHNTLHAFQNYPFHEGTRRAKKIFGYFPSLQLREYRDLYEAGRIRKDILERVISEQKGAQHLEDWMQRLLEKEYDDSVSPRIGKLRANWKRHYPIDLDLMVHPLLFRILCSYLDQGISIWGFPIGHKGFLAALKEMEEKSFASFFKTKRAKKLLVSGNCKMADLLKLLVGDETLYAQYLFDQQFAHPGWSGMVASVEAQPASLLNPKNITVHDLVVFELLLEIDALDSYFGESWEPIAHILEERPEPLFADVPETEVDTVFSLWHDAFEWTYYDQVLTGIALQDKTWERKIENRSFQTYFCIDDRLTSFRRYLEQLDPDCETFTTAGFFNVELYYQPENGKFYTKCCPAPVFPKFLVKEIGNKQKIKKEVHFSKLTHSLFQGWFISQTIGFVSALRLALNVFKPGSMPAGASSYTHVDKNATLTIENKDPNDKENGLQIGFTIDEMVQRVQGVLTSTGLNGVDKTFAPIVYMIGHGASSVNNPHYTAYDCGACGGRPGSVNARTFCYMANHPKVREALKERGIIIPPTTQFLPGLHDTTRDEVAFFDEEILSEENAGKHRRNTLVINEALDLHAKERSRRLVSIDTKMSPKEIHEEIRRRSVSLFEPRPELNHATNAVSIIGRRSITENLFLDRRASTSTYDYRTDPEGKFLTMSMGPIALVMGGIDLEYFFSRTDNHKMGAGTKLPHNVMGLIGVANGADGDLRTGLPSQMIEIHDPVRLLVIIEHYPDVALKVIKSQTANYSFYENYWVHCLALHPDTGELWLYKDGSFSKIYKPLLNDLETVSDLSALMERAKKAESIETLDAVQENLPVYFIEKKERVKK</sequence>
<name>DABA_NITMU</name>
<reference key="1">
    <citation type="submission" date="2005-08" db="EMBL/GenBank/DDBJ databases">
        <title>Complete sequence of chromosome 1 of Nitrosospira multiformis ATCC 25196.</title>
        <authorList>
            <person name="Copeland A."/>
            <person name="Lucas S."/>
            <person name="Lapidus A."/>
            <person name="Barry K."/>
            <person name="Detter J.C."/>
            <person name="Glavina T."/>
            <person name="Hammon N."/>
            <person name="Israni S."/>
            <person name="Pitluck S."/>
            <person name="Chain P."/>
            <person name="Malfatti S."/>
            <person name="Shin M."/>
            <person name="Vergez L."/>
            <person name="Schmutz J."/>
            <person name="Larimer F."/>
            <person name="Land M."/>
            <person name="Hauser L."/>
            <person name="Kyrpides N."/>
            <person name="Lykidis A."/>
            <person name="Richardson P."/>
        </authorList>
    </citation>
    <scope>NUCLEOTIDE SEQUENCE [LARGE SCALE GENOMIC DNA]</scope>
    <source>
        <strain>ATCC 25196 / NCIMB 11849 / C 71</strain>
    </source>
</reference>
<keyword id="KW-0997">Cell inner membrane</keyword>
<keyword id="KW-1003">Cell membrane</keyword>
<keyword id="KW-0472">Membrane</keyword>
<keyword id="KW-0479">Metal-binding</keyword>
<keyword id="KW-1185">Reference proteome</keyword>
<keyword id="KW-0813">Transport</keyword>
<keyword id="KW-0862">Zinc</keyword>
<dbReference type="EMBL" id="CP000103">
    <property type="protein sequence ID" value="ABB74015.1"/>
    <property type="molecule type" value="Genomic_DNA"/>
</dbReference>
<dbReference type="RefSeq" id="WP_011380065.1">
    <property type="nucleotide sequence ID" value="NC_007614.1"/>
</dbReference>
<dbReference type="STRING" id="323848.Nmul_A0708"/>
<dbReference type="KEGG" id="nmu:Nmul_A0708"/>
<dbReference type="eggNOG" id="COG3002">
    <property type="taxonomic scope" value="Bacteria"/>
</dbReference>
<dbReference type="HOGENOM" id="CLU_009885_0_0_4"/>
<dbReference type="OrthoDB" id="9805101at2"/>
<dbReference type="Proteomes" id="UP000002718">
    <property type="component" value="Chromosome"/>
</dbReference>
<dbReference type="GO" id="GO:0005886">
    <property type="term" value="C:plasma membrane"/>
    <property type="evidence" value="ECO:0007669"/>
    <property type="project" value="UniProtKB-SubCell"/>
</dbReference>
<dbReference type="GO" id="GO:0008270">
    <property type="term" value="F:zinc ion binding"/>
    <property type="evidence" value="ECO:0007669"/>
    <property type="project" value="UniProtKB-UniRule"/>
</dbReference>
<dbReference type="HAMAP" id="MF_01871">
    <property type="entry name" value="DabA"/>
    <property type="match status" value="1"/>
</dbReference>
<dbReference type="InterPro" id="IPR018752">
    <property type="entry name" value="DabA"/>
</dbReference>
<dbReference type="PANTHER" id="PTHR38344:SF1">
    <property type="entry name" value="INORGANIC CARBON TRANSPORTER SUBUNIT DABA-RELATED"/>
    <property type="match status" value="1"/>
</dbReference>
<dbReference type="PANTHER" id="PTHR38344">
    <property type="entry name" value="UPF0753 PROTEIN AQ_863"/>
    <property type="match status" value="1"/>
</dbReference>
<dbReference type="Pfam" id="PF10070">
    <property type="entry name" value="DabA"/>
    <property type="match status" value="1"/>
</dbReference>
<protein>
    <recommendedName>
        <fullName evidence="1">Probable inorganic carbon transporter subunit DabA</fullName>
    </recommendedName>
</protein>
<proteinExistence type="inferred from homology"/>
<comment type="function">
    <text evidence="1">Part of an energy-coupled inorganic carbon pump.</text>
</comment>
<comment type="cofactor">
    <cofactor evidence="1">
        <name>Zn(2+)</name>
        <dbReference type="ChEBI" id="CHEBI:29105"/>
    </cofactor>
</comment>
<comment type="subunit">
    <text evidence="1">Forms a complex with DabB.</text>
</comment>
<comment type="subcellular location">
    <subcellularLocation>
        <location evidence="1">Cell inner membrane</location>
        <topology evidence="1">Peripheral membrane protein</topology>
    </subcellularLocation>
</comment>
<comment type="similarity">
    <text evidence="1">Belongs to the inorganic carbon transporter (TC 9.A.2) DabA family.</text>
</comment>
<accession>Q2YB56</accession>
<evidence type="ECO:0000255" key="1">
    <source>
        <dbReference type="HAMAP-Rule" id="MF_01871"/>
    </source>
</evidence>
<gene>
    <name evidence="1" type="primary">dabA</name>
    <name type="ordered locus">Nmul_A0708</name>
</gene>
<feature type="chain" id="PRO_0000387284" description="Probable inorganic carbon transporter subunit DabA">
    <location>
        <begin position="1"/>
        <end position="915"/>
    </location>
</feature>
<feature type="binding site" evidence="1">
    <location>
        <position position="392"/>
    </location>
    <ligand>
        <name>Zn(2+)</name>
        <dbReference type="ChEBI" id="CHEBI:29105"/>
    </ligand>
</feature>
<feature type="binding site" evidence="1">
    <location>
        <position position="394"/>
    </location>
    <ligand>
        <name>Zn(2+)</name>
        <dbReference type="ChEBI" id="CHEBI:29105"/>
    </ligand>
</feature>
<feature type="binding site" evidence="1">
    <location>
        <position position="566"/>
    </location>
    <ligand>
        <name>Zn(2+)</name>
        <dbReference type="ChEBI" id="CHEBI:29105"/>
    </ligand>
</feature>
<feature type="binding site" evidence="1">
    <location>
        <position position="581"/>
    </location>
    <ligand>
        <name>Zn(2+)</name>
        <dbReference type="ChEBI" id="CHEBI:29105"/>
    </ligand>
</feature>